<keyword id="KW-0046">Antibiotic resistance</keyword>
<keyword id="KW-0997">Cell inner membrane</keyword>
<keyword id="KW-1003">Cell membrane</keyword>
<keyword id="KW-0441">Lipid A biosynthesis</keyword>
<keyword id="KW-0444">Lipid biosynthesis</keyword>
<keyword id="KW-0443">Lipid metabolism</keyword>
<keyword id="KW-0448">Lipopolysaccharide biosynthesis</keyword>
<keyword id="KW-0472">Membrane</keyword>
<keyword id="KW-1185">Reference proteome</keyword>
<keyword id="KW-0808">Transferase</keyword>
<keyword id="KW-0812">Transmembrane</keyword>
<keyword id="KW-1133">Transmembrane helix</keyword>
<feature type="chain" id="PRO_0000209151" description="Phosphoethanolamine transferase EptA">
    <location>
        <begin position="1"/>
        <end position="547"/>
    </location>
</feature>
<feature type="topological domain" description="Cytoplasmic" evidence="3">
    <location>
        <begin position="1"/>
        <end position="9"/>
    </location>
</feature>
<feature type="transmembrane region" description="Helical" evidence="3">
    <location>
        <begin position="10"/>
        <end position="30"/>
    </location>
</feature>
<feature type="topological domain" description="Periplasmic" evidence="3">
    <location>
        <begin position="31"/>
        <end position="47"/>
    </location>
</feature>
<feature type="transmembrane region" description="Helical" evidence="3">
    <location>
        <begin position="48"/>
        <end position="68"/>
    </location>
</feature>
<feature type="topological domain" description="Cytoplasmic" evidence="3">
    <location>
        <begin position="69"/>
        <end position="79"/>
    </location>
</feature>
<feature type="transmembrane region" description="Helical" evidence="3">
    <location>
        <begin position="80"/>
        <end position="100"/>
    </location>
</feature>
<feature type="topological domain" description="Periplasmic" evidence="3">
    <location>
        <begin position="101"/>
        <end position="123"/>
    </location>
</feature>
<feature type="transmembrane region" description="Helical" evidence="3">
    <location>
        <begin position="124"/>
        <end position="144"/>
    </location>
</feature>
<feature type="topological domain" description="Cytoplasmic" evidence="3">
    <location>
        <begin position="145"/>
        <end position="154"/>
    </location>
</feature>
<feature type="transmembrane region" description="Helical" evidence="3">
    <location>
        <begin position="155"/>
        <end position="175"/>
    </location>
</feature>
<feature type="topological domain" description="Periplasmic" evidence="3">
    <location>
        <begin position="176"/>
        <end position="547"/>
    </location>
</feature>
<proteinExistence type="evidence at protein level"/>
<accession>P30845</accession>
<accession>P76793</accession>
<accession>Q2M6J0</accession>
<protein>
    <recommendedName>
        <fullName>Phosphoethanolamine transferase EptA</fullName>
        <ecNumber>2.7.-.-</ecNumber>
    </recommendedName>
    <alternativeName>
        <fullName>Polymyxin resistance protein PmrC</fullName>
    </alternativeName>
</protein>
<organism>
    <name type="scientific">Escherichia coli (strain K12)</name>
    <dbReference type="NCBI Taxonomy" id="83333"/>
    <lineage>
        <taxon>Bacteria</taxon>
        <taxon>Pseudomonadati</taxon>
        <taxon>Pseudomonadota</taxon>
        <taxon>Gammaproteobacteria</taxon>
        <taxon>Enterobacterales</taxon>
        <taxon>Enterobacteriaceae</taxon>
        <taxon>Escherichia</taxon>
    </lineage>
</organism>
<dbReference type="EC" id="2.7.-.-"/>
<dbReference type="EMBL" id="U14003">
    <property type="protein sequence ID" value="AAA97013.1"/>
    <property type="status" value="ALT_INIT"/>
    <property type="molecule type" value="Genomic_DNA"/>
</dbReference>
<dbReference type="EMBL" id="U00096">
    <property type="protein sequence ID" value="AAC77075.2"/>
    <property type="molecule type" value="Genomic_DNA"/>
</dbReference>
<dbReference type="EMBL" id="AP009048">
    <property type="protein sequence ID" value="BAE78116.1"/>
    <property type="molecule type" value="Genomic_DNA"/>
</dbReference>
<dbReference type="EMBL" id="D14055">
    <property type="protein sequence ID" value="BAA03142.1"/>
    <property type="molecule type" value="Genomic_DNA"/>
</dbReference>
<dbReference type="RefSeq" id="NP_418538.2">
    <property type="nucleotide sequence ID" value="NC_000913.3"/>
</dbReference>
<dbReference type="RefSeq" id="WP_000919792.1">
    <property type="nucleotide sequence ID" value="NZ_LN832404.1"/>
</dbReference>
<dbReference type="SMR" id="P30845"/>
<dbReference type="BioGRID" id="4263082">
    <property type="interactions" value="125"/>
</dbReference>
<dbReference type="DIP" id="DIP-12561N"/>
<dbReference type="FunCoup" id="P30845">
    <property type="interactions" value="184"/>
</dbReference>
<dbReference type="IntAct" id="P30845">
    <property type="interactions" value="2"/>
</dbReference>
<dbReference type="STRING" id="511145.b4114"/>
<dbReference type="CARD" id="ARO:3003576">
    <property type="molecule name" value="eptA"/>
    <property type="mechanism identifier" value="ARO:0001001"/>
    <property type="mechanism name" value="antibiotic target alteration"/>
</dbReference>
<dbReference type="jPOST" id="P30845"/>
<dbReference type="PaxDb" id="511145-b4114"/>
<dbReference type="EnsemblBacteria" id="AAC77075">
    <property type="protein sequence ID" value="AAC77075"/>
    <property type="gene ID" value="b4114"/>
</dbReference>
<dbReference type="GeneID" id="75169632"/>
<dbReference type="GeneID" id="948629"/>
<dbReference type="KEGG" id="ecj:JW5730"/>
<dbReference type="KEGG" id="eco:b4114"/>
<dbReference type="KEGG" id="ecoc:C3026_22230"/>
<dbReference type="PATRIC" id="fig|1411691.4.peg.2586"/>
<dbReference type="EchoBASE" id="EB1570"/>
<dbReference type="eggNOG" id="COG2194">
    <property type="taxonomic scope" value="Bacteria"/>
</dbReference>
<dbReference type="HOGENOM" id="CLU_018534_1_0_6"/>
<dbReference type="InParanoid" id="P30845"/>
<dbReference type="OMA" id="FWYSAND"/>
<dbReference type="OrthoDB" id="9786870at2"/>
<dbReference type="PhylomeDB" id="P30845"/>
<dbReference type="BioCyc" id="EcoCyc:EG11613-MONOMER"/>
<dbReference type="BioCyc" id="MetaCyc:EG11613-MONOMER"/>
<dbReference type="BRENDA" id="2.7.8.43">
    <property type="organism ID" value="2026"/>
</dbReference>
<dbReference type="PRO" id="PR:P30845"/>
<dbReference type="Proteomes" id="UP000000625">
    <property type="component" value="Chromosome"/>
</dbReference>
<dbReference type="GO" id="GO:0005886">
    <property type="term" value="C:plasma membrane"/>
    <property type="evidence" value="ECO:0000314"/>
    <property type="project" value="EcoCyc"/>
</dbReference>
<dbReference type="GO" id="GO:0016776">
    <property type="term" value="F:phosphotransferase activity, phosphate group as acceptor"/>
    <property type="evidence" value="ECO:0000318"/>
    <property type="project" value="GO_Central"/>
</dbReference>
<dbReference type="GO" id="GO:0009245">
    <property type="term" value="P:lipid A biosynthetic process"/>
    <property type="evidence" value="ECO:0007669"/>
    <property type="project" value="UniProtKB-KW"/>
</dbReference>
<dbReference type="GO" id="GO:0009103">
    <property type="term" value="P:lipopolysaccharide biosynthetic process"/>
    <property type="evidence" value="ECO:0000304"/>
    <property type="project" value="EcoCyc"/>
</dbReference>
<dbReference type="GO" id="GO:0009244">
    <property type="term" value="P:lipopolysaccharide core region biosynthetic process"/>
    <property type="evidence" value="ECO:0000318"/>
    <property type="project" value="GO_Central"/>
</dbReference>
<dbReference type="GO" id="GO:0046677">
    <property type="term" value="P:response to antibiotic"/>
    <property type="evidence" value="ECO:0007669"/>
    <property type="project" value="UniProtKB-KW"/>
</dbReference>
<dbReference type="CDD" id="cd16017">
    <property type="entry name" value="LptA"/>
    <property type="match status" value="1"/>
</dbReference>
<dbReference type="FunFam" id="3.40.720.10:FF:000022">
    <property type="entry name" value="Phosphoethanolamine transferase eptA"/>
    <property type="match status" value="1"/>
</dbReference>
<dbReference type="Gene3D" id="3.40.720.10">
    <property type="entry name" value="Alkaline Phosphatase, subunit A"/>
    <property type="match status" value="1"/>
</dbReference>
<dbReference type="InterPro" id="IPR017850">
    <property type="entry name" value="Alkaline_phosphatase_core_sf"/>
</dbReference>
<dbReference type="InterPro" id="IPR012549">
    <property type="entry name" value="EptA-like_N"/>
</dbReference>
<dbReference type="InterPro" id="IPR040423">
    <property type="entry name" value="PEA_transferase"/>
</dbReference>
<dbReference type="InterPro" id="IPR000917">
    <property type="entry name" value="Sulfatase_N"/>
</dbReference>
<dbReference type="NCBIfam" id="NF028537">
    <property type="entry name" value="P_eth_NH2_trans"/>
    <property type="match status" value="1"/>
</dbReference>
<dbReference type="NCBIfam" id="NF008619">
    <property type="entry name" value="PRK11598.1"/>
    <property type="match status" value="1"/>
</dbReference>
<dbReference type="PANTHER" id="PTHR30443">
    <property type="entry name" value="INNER MEMBRANE PROTEIN"/>
    <property type="match status" value="1"/>
</dbReference>
<dbReference type="PANTHER" id="PTHR30443:SF0">
    <property type="entry name" value="PHOSPHOETHANOLAMINE TRANSFERASE EPTA"/>
    <property type="match status" value="1"/>
</dbReference>
<dbReference type="Pfam" id="PF08019">
    <property type="entry name" value="EptA_B_N"/>
    <property type="match status" value="1"/>
</dbReference>
<dbReference type="Pfam" id="PF00884">
    <property type="entry name" value="Sulfatase"/>
    <property type="match status" value="1"/>
</dbReference>
<dbReference type="SUPFAM" id="SSF53649">
    <property type="entry name" value="Alkaline phosphatase-like"/>
    <property type="match status" value="1"/>
</dbReference>
<sequence>MLKRLLKRPSLNLLAWLLLAAFYISICLNIAFFKQVLQALPLDSLHNVLVFLSMPVVAFSVINIVLTLSSFLWLNRPLACLFILVGAAAQYFIMTYGIVIDRSMIANIIDTTPAESYALMTPQMLLTLGFSGVLAALIACWIKIKPATSRLRSVLFRGANILVSVLLILLVAALFYKDYASLFRNNKELVKSLSPSNSIVASWSWYSHQRLANLPLVRIGEDAHRNPLMQNEKRKNLTILIVGETSRAENFSLNGYPRETNPRLAKDNVVYFPNTASCGTATAVSVPCMFSDMPREHYKEELAQHQEGVLDIIQRAGINVLWNDNDGGCKGACDRVPHQNVTALNLPDQCINGECYDEVLFHGLEEYINNLQGDGVIVLHTIGSHGPTYYNRYPPQFRKFTPTCDTNEIQTCTKEQLVNTYDNTLVYVDYIVDKAINLLKEHQDKFTTSLVYLSDHGESLGENGIYLHGLPYAIAPDSQKQVPMLLWLSEDYQKRYQVDQNCLQKQAQTQHYSQDNLFSTLLGLTGVETKYYQAADDILQTCRRVSE</sequence>
<evidence type="ECO:0000250" key="1"/>
<evidence type="ECO:0000250" key="2">
    <source>
        <dbReference type="UniProtKB" id="A0A0H3JML2"/>
    </source>
</evidence>
<evidence type="ECO:0000255" key="3"/>
<evidence type="ECO:0000269" key="4">
    <source>
    </source>
</evidence>
<evidence type="ECO:0000305" key="5"/>
<name>EPTA_ECOLI</name>
<comment type="function">
    <text evidence="2">Catalyzes the addition of a phosphoethanolamine moiety to the lipid A. The phosphoethanolamine modification is required for resistance to polymyxin.</text>
</comment>
<comment type="subunit">
    <text evidence="4">Has been isolated as a 91 kDa complex containing ZipA-EptA and an unidentified 24 kDa protein.</text>
</comment>
<comment type="subcellular location">
    <subcellularLocation>
        <location evidence="4">Cell inner membrane</location>
        <topology evidence="4">Multi-pass membrane protein</topology>
    </subcellularLocation>
</comment>
<comment type="induction">
    <text evidence="1">The eptA-basRS operon is positively autoregulated by BasR under high iron or aluminum concentration conditions.</text>
</comment>
<comment type="similarity">
    <text evidence="5">Belongs to the phosphoethanolamine transferase family. EptA subfamily.</text>
</comment>
<comment type="sequence caution" evidence="5">
    <conflict type="erroneous initiation">
        <sequence resource="EMBL-CDS" id="AAA97013"/>
    </conflict>
    <text>Extended N-terminus.</text>
</comment>
<reference key="1">
    <citation type="journal article" date="1995" name="Nucleic Acids Res.">
        <title>Analysis of the Escherichia coli genome VI: DNA sequence of the region from 92.8 through 100 minutes.</title>
        <authorList>
            <person name="Burland V.D."/>
            <person name="Plunkett G. III"/>
            <person name="Sofia H.J."/>
            <person name="Daniels D.L."/>
            <person name="Blattner F.R."/>
        </authorList>
    </citation>
    <scope>NUCLEOTIDE SEQUENCE [LARGE SCALE GENOMIC DNA]</scope>
    <source>
        <strain>K12 / MG1655 / ATCC 47076</strain>
    </source>
</reference>
<reference key="2">
    <citation type="journal article" date="1997" name="Science">
        <title>The complete genome sequence of Escherichia coli K-12.</title>
        <authorList>
            <person name="Blattner F.R."/>
            <person name="Plunkett G. III"/>
            <person name="Bloch C.A."/>
            <person name="Perna N.T."/>
            <person name="Burland V."/>
            <person name="Riley M."/>
            <person name="Collado-Vides J."/>
            <person name="Glasner J.D."/>
            <person name="Rode C.K."/>
            <person name="Mayhew G.F."/>
            <person name="Gregor J."/>
            <person name="Davis N.W."/>
            <person name="Kirkpatrick H.A."/>
            <person name="Goeden M.A."/>
            <person name="Rose D.J."/>
            <person name="Mau B."/>
            <person name="Shao Y."/>
        </authorList>
    </citation>
    <scope>NUCLEOTIDE SEQUENCE [LARGE SCALE GENOMIC DNA]</scope>
    <source>
        <strain>K12 / MG1655 / ATCC 47076</strain>
    </source>
</reference>
<reference key="3">
    <citation type="journal article" date="2006" name="Mol. Syst. Biol.">
        <title>Highly accurate genome sequences of Escherichia coli K-12 strains MG1655 and W3110.</title>
        <authorList>
            <person name="Hayashi K."/>
            <person name="Morooka N."/>
            <person name="Yamamoto Y."/>
            <person name="Fujita K."/>
            <person name="Isono K."/>
            <person name="Choi S."/>
            <person name="Ohtsubo E."/>
            <person name="Baba T."/>
            <person name="Wanner B.L."/>
            <person name="Mori H."/>
            <person name="Horiuchi T."/>
        </authorList>
    </citation>
    <scope>NUCLEOTIDE SEQUENCE [LARGE SCALE GENOMIC DNA]</scope>
    <source>
        <strain>K12 / W3110 / ATCC 27325 / DSM 5911</strain>
    </source>
</reference>
<reference key="4">
    <citation type="journal article" date="1993" name="J. Biochem.">
        <title>Novel members of the two-component signal transduction genes in Escherichia coli.</title>
        <authorList>
            <person name="Nagasawa S."/>
            <person name="Ishige K."/>
            <person name="Mizuno T."/>
        </authorList>
    </citation>
    <scope>NUCLEOTIDE SEQUENCE [GENOMIC DNA] OF 311-547</scope>
    <source>
        <strain>K12</strain>
    </source>
</reference>
<reference key="5">
    <citation type="journal article" date="2005" name="J. Biol. Chem.">
        <title>Protein complexes of the Escherichia coli cell envelope.</title>
        <authorList>
            <person name="Stenberg F."/>
            <person name="Chovanec P."/>
            <person name="Maslen S.L."/>
            <person name="Robinson C.V."/>
            <person name="Ilag L."/>
            <person name="von Heijne G."/>
            <person name="Daley D.O."/>
        </authorList>
    </citation>
    <scope>IDENTIFICATION BY MASS SPECTROMETRY</scope>
    <scope>SUBUNIT</scope>
    <scope>SUBCELLULAR LOCATION</scope>
    <source>
        <strain>BL21-DE3</strain>
    </source>
</reference>
<gene>
    <name type="primary">eptA</name>
    <name type="synonym">pmrC</name>
    <name type="synonym">yjdB</name>
    <name type="ordered locus">b4114</name>
    <name type="ordered locus">JW5730</name>
</gene>